<sequence length="128" mass="13736">MLQNLALSFPFITRFFQKQMLGSQNSSGKTPGFNEAEGITSNIFQIAGGISLLVILLLIIGFLSCLLGGIFLHKHKYAEVGSPAHAKTKNLFVAFFVVGSLLLLVAVVMLIAFGVLDASLPLPKENNS</sequence>
<accession>P75204</accession>
<comment type="subcellular location">
    <subcellularLocation>
        <location evidence="2">Cell membrane</location>
        <topology evidence="2">Multi-pass membrane protein</topology>
    </subcellularLocation>
</comment>
<organism>
    <name type="scientific">Mycoplasma pneumoniae (strain ATCC 29342 / M129 / Subtype 1)</name>
    <name type="common">Mycoplasmoides pneumoniae</name>
    <dbReference type="NCBI Taxonomy" id="272634"/>
    <lineage>
        <taxon>Bacteria</taxon>
        <taxon>Bacillati</taxon>
        <taxon>Mycoplasmatota</taxon>
        <taxon>Mycoplasmoidales</taxon>
        <taxon>Mycoplasmoidaceae</taxon>
        <taxon>Mycoplasmoides</taxon>
    </lineage>
</organism>
<dbReference type="EMBL" id="U00089">
    <property type="protein sequence ID" value="AAB95915.1"/>
    <property type="molecule type" value="Genomic_DNA"/>
</dbReference>
<dbReference type="PIR" id="S73593">
    <property type="entry name" value="S73593"/>
</dbReference>
<dbReference type="RefSeq" id="NP_110264.1">
    <property type="nucleotide sequence ID" value="NC_000912.1"/>
</dbReference>
<dbReference type="RefSeq" id="WP_010874932.1">
    <property type="nucleotide sequence ID" value="NC_000912.1"/>
</dbReference>
<dbReference type="SMR" id="P75204"/>
<dbReference type="STRING" id="272634.MPN_575"/>
<dbReference type="EnsemblBacteria" id="AAB95915">
    <property type="protein sequence ID" value="AAB95915"/>
    <property type="gene ID" value="MPN_575"/>
</dbReference>
<dbReference type="KEGG" id="mpn:MPN_575"/>
<dbReference type="PATRIC" id="fig|272634.6.peg.637"/>
<dbReference type="HOGENOM" id="CLU_1957169_0_0_14"/>
<dbReference type="BioCyc" id="MPNE272634:G1GJ3-940-MONOMER"/>
<dbReference type="Proteomes" id="UP000000808">
    <property type="component" value="Chromosome"/>
</dbReference>
<dbReference type="GO" id="GO:0005886">
    <property type="term" value="C:plasma membrane"/>
    <property type="evidence" value="ECO:0007669"/>
    <property type="project" value="UniProtKB-SubCell"/>
</dbReference>
<reference key="1">
    <citation type="journal article" date="1996" name="Nucleic Acids Res.">
        <title>Complete sequence analysis of the genome of the bacterium Mycoplasma pneumoniae.</title>
        <authorList>
            <person name="Himmelreich R."/>
            <person name="Hilbert H."/>
            <person name="Plagens H."/>
            <person name="Pirkl E."/>
            <person name="Li B.-C."/>
            <person name="Herrmann R."/>
        </authorList>
    </citation>
    <scope>NUCLEOTIDE SEQUENCE [LARGE SCALE GENOMIC DNA]</scope>
    <source>
        <strain>ATCC 29342 / M129 / Subtype 1</strain>
    </source>
</reference>
<proteinExistence type="predicted"/>
<protein>
    <recommendedName>
        <fullName>Uncharacterized protein MPN_575</fullName>
    </recommendedName>
</protein>
<gene>
    <name type="ordered locus">MPN_575</name>
    <name type="ORF">D02_orf128</name>
    <name type="ORF">MP267</name>
</gene>
<evidence type="ECO:0000255" key="1"/>
<evidence type="ECO:0000305" key="2"/>
<keyword id="KW-1003">Cell membrane</keyword>
<keyword id="KW-0472">Membrane</keyword>
<keyword id="KW-1185">Reference proteome</keyword>
<keyword id="KW-0812">Transmembrane</keyword>
<keyword id="KW-1133">Transmembrane helix</keyword>
<feature type="chain" id="PRO_0000210694" description="Uncharacterized protein MPN_575">
    <location>
        <begin position="1"/>
        <end position="128"/>
    </location>
</feature>
<feature type="transmembrane region" description="Helical" evidence="1">
    <location>
        <begin position="52"/>
        <end position="72"/>
    </location>
</feature>
<feature type="transmembrane region" description="Helical" evidence="1">
    <location>
        <begin position="91"/>
        <end position="111"/>
    </location>
</feature>
<name>Y575_MYCPN</name>